<sequence>MLILTRRVGETLMIGDEVTVTVLGVKGNQVRIGVNAPKEVSVHREEIYQRIQAEKSQQSSY</sequence>
<name>CSRA_SALPC</name>
<protein>
    <recommendedName>
        <fullName evidence="1">Translational regulator CsrA</fullName>
    </recommendedName>
    <alternativeName>
        <fullName evidence="1">Carbon storage regulator</fullName>
    </alternativeName>
</protein>
<keyword id="KW-0010">Activator</keyword>
<keyword id="KW-0963">Cytoplasm</keyword>
<keyword id="KW-0678">Repressor</keyword>
<keyword id="KW-0694">RNA-binding</keyword>
<keyword id="KW-0810">Translation regulation</keyword>
<gene>
    <name evidence="1" type="primary">csrA</name>
    <name type="ordered locus">SPC_2867</name>
</gene>
<proteinExistence type="inferred from homology"/>
<comment type="function">
    <text evidence="1">A key translational regulator that binds mRNA to regulate translation initiation and/or mRNA stability. Mediates global changes in gene expression, shifting from rapid growth to stress survival by linking envelope stress, the stringent response and the catabolite repression systems. Usually binds in the 5'-UTR; binding at or near the Shine-Dalgarno sequence prevents ribosome-binding, repressing translation, binding elsewhere in the 5'-UTR can activate translation and/or stabilize the mRNA. Its function is antagonized by small RNA(s).</text>
</comment>
<comment type="subunit">
    <text evidence="1">Homodimer; the beta-strands of each monomer intercalate to form a hydrophobic core, while the alpha-helices form wings that extend away from the core.</text>
</comment>
<comment type="subcellular location">
    <subcellularLocation>
        <location evidence="1">Cytoplasm</location>
    </subcellularLocation>
</comment>
<comment type="similarity">
    <text evidence="1">Belongs to the CsrA/RsmA family.</text>
</comment>
<accession>C0PWL9</accession>
<dbReference type="EMBL" id="CP000857">
    <property type="protein sequence ID" value="ACN46961.1"/>
    <property type="molecule type" value="Genomic_DNA"/>
</dbReference>
<dbReference type="RefSeq" id="WP_000906486.1">
    <property type="nucleotide sequence ID" value="NC_012125.1"/>
</dbReference>
<dbReference type="SMR" id="C0PWL9"/>
<dbReference type="GeneID" id="98389839"/>
<dbReference type="KEGG" id="sei:SPC_2867"/>
<dbReference type="HOGENOM" id="CLU_164837_2_1_6"/>
<dbReference type="Proteomes" id="UP000001599">
    <property type="component" value="Chromosome"/>
</dbReference>
<dbReference type="GO" id="GO:0005829">
    <property type="term" value="C:cytosol"/>
    <property type="evidence" value="ECO:0007669"/>
    <property type="project" value="TreeGrafter"/>
</dbReference>
<dbReference type="GO" id="GO:0048027">
    <property type="term" value="F:mRNA 5'-UTR binding"/>
    <property type="evidence" value="ECO:0007669"/>
    <property type="project" value="UniProtKB-UniRule"/>
</dbReference>
<dbReference type="GO" id="GO:0006402">
    <property type="term" value="P:mRNA catabolic process"/>
    <property type="evidence" value="ECO:0007669"/>
    <property type="project" value="InterPro"/>
</dbReference>
<dbReference type="GO" id="GO:0045947">
    <property type="term" value="P:negative regulation of translational initiation"/>
    <property type="evidence" value="ECO:0007669"/>
    <property type="project" value="UniProtKB-UniRule"/>
</dbReference>
<dbReference type="GO" id="GO:0045948">
    <property type="term" value="P:positive regulation of translational initiation"/>
    <property type="evidence" value="ECO:0007669"/>
    <property type="project" value="UniProtKB-UniRule"/>
</dbReference>
<dbReference type="GO" id="GO:0006109">
    <property type="term" value="P:regulation of carbohydrate metabolic process"/>
    <property type="evidence" value="ECO:0007669"/>
    <property type="project" value="UniProtKB-UniRule"/>
</dbReference>
<dbReference type="FunFam" id="2.60.40.4380:FF:000001">
    <property type="entry name" value="Translational regulator CsrA"/>
    <property type="match status" value="1"/>
</dbReference>
<dbReference type="Gene3D" id="2.60.40.4380">
    <property type="entry name" value="Translational regulator CsrA"/>
    <property type="match status" value="1"/>
</dbReference>
<dbReference type="HAMAP" id="MF_00167">
    <property type="entry name" value="CsrA"/>
    <property type="match status" value="1"/>
</dbReference>
<dbReference type="InterPro" id="IPR003751">
    <property type="entry name" value="CsrA"/>
</dbReference>
<dbReference type="InterPro" id="IPR036107">
    <property type="entry name" value="CsrA_sf"/>
</dbReference>
<dbReference type="NCBIfam" id="TIGR00202">
    <property type="entry name" value="csrA"/>
    <property type="match status" value="1"/>
</dbReference>
<dbReference type="NCBIfam" id="NF002469">
    <property type="entry name" value="PRK01712.1"/>
    <property type="match status" value="1"/>
</dbReference>
<dbReference type="PANTHER" id="PTHR34984">
    <property type="entry name" value="CARBON STORAGE REGULATOR"/>
    <property type="match status" value="1"/>
</dbReference>
<dbReference type="PANTHER" id="PTHR34984:SF1">
    <property type="entry name" value="CARBON STORAGE REGULATOR"/>
    <property type="match status" value="1"/>
</dbReference>
<dbReference type="Pfam" id="PF02599">
    <property type="entry name" value="CsrA"/>
    <property type="match status" value="1"/>
</dbReference>
<dbReference type="SUPFAM" id="SSF117130">
    <property type="entry name" value="CsrA-like"/>
    <property type="match status" value="1"/>
</dbReference>
<feature type="chain" id="PRO_1000123631" description="Translational regulator CsrA">
    <location>
        <begin position="1"/>
        <end position="61"/>
    </location>
</feature>
<evidence type="ECO:0000255" key="1">
    <source>
        <dbReference type="HAMAP-Rule" id="MF_00167"/>
    </source>
</evidence>
<reference key="1">
    <citation type="journal article" date="2009" name="PLoS ONE">
        <title>Salmonella paratyphi C: genetic divergence from Salmonella choleraesuis and pathogenic convergence with Salmonella typhi.</title>
        <authorList>
            <person name="Liu W.-Q."/>
            <person name="Feng Y."/>
            <person name="Wang Y."/>
            <person name="Zou Q.-H."/>
            <person name="Chen F."/>
            <person name="Guo J.-T."/>
            <person name="Peng Y.-H."/>
            <person name="Jin Y."/>
            <person name="Li Y.-G."/>
            <person name="Hu S.-N."/>
            <person name="Johnston R.N."/>
            <person name="Liu G.-R."/>
            <person name="Liu S.-L."/>
        </authorList>
    </citation>
    <scope>NUCLEOTIDE SEQUENCE [LARGE SCALE GENOMIC DNA]</scope>
    <source>
        <strain>RKS4594</strain>
    </source>
</reference>
<organism>
    <name type="scientific">Salmonella paratyphi C (strain RKS4594)</name>
    <dbReference type="NCBI Taxonomy" id="476213"/>
    <lineage>
        <taxon>Bacteria</taxon>
        <taxon>Pseudomonadati</taxon>
        <taxon>Pseudomonadota</taxon>
        <taxon>Gammaproteobacteria</taxon>
        <taxon>Enterobacterales</taxon>
        <taxon>Enterobacteriaceae</taxon>
        <taxon>Salmonella</taxon>
    </lineage>
</organism>